<evidence type="ECO:0000255" key="1">
    <source>
        <dbReference type="HAMAP-Rule" id="MF_00503"/>
    </source>
</evidence>
<evidence type="ECO:0000305" key="2"/>
<organism>
    <name type="scientific">Variovorax paradoxus (strain S110)</name>
    <dbReference type="NCBI Taxonomy" id="543728"/>
    <lineage>
        <taxon>Bacteria</taxon>
        <taxon>Pseudomonadati</taxon>
        <taxon>Pseudomonadota</taxon>
        <taxon>Betaproteobacteria</taxon>
        <taxon>Burkholderiales</taxon>
        <taxon>Comamonadaceae</taxon>
        <taxon>Variovorax</taxon>
    </lineage>
</organism>
<proteinExistence type="inferred from homology"/>
<protein>
    <recommendedName>
        <fullName evidence="1">Large ribosomal subunit protein bL9</fullName>
    </recommendedName>
    <alternativeName>
        <fullName evidence="2">50S ribosomal protein L9</fullName>
    </alternativeName>
</protein>
<name>RL9_VARPS</name>
<gene>
    <name evidence="1" type="primary">rplI</name>
    <name type="ordered locus">Vapar_1821</name>
</gene>
<dbReference type="EMBL" id="CP001635">
    <property type="protein sequence ID" value="ACS18471.1"/>
    <property type="molecule type" value="Genomic_DNA"/>
</dbReference>
<dbReference type="SMR" id="C5CUP3"/>
<dbReference type="STRING" id="543728.Vapar_1821"/>
<dbReference type="KEGG" id="vap:Vapar_1821"/>
<dbReference type="eggNOG" id="COG0359">
    <property type="taxonomic scope" value="Bacteria"/>
</dbReference>
<dbReference type="HOGENOM" id="CLU_078938_4_1_4"/>
<dbReference type="OrthoDB" id="9788336at2"/>
<dbReference type="GO" id="GO:1990904">
    <property type="term" value="C:ribonucleoprotein complex"/>
    <property type="evidence" value="ECO:0007669"/>
    <property type="project" value="UniProtKB-KW"/>
</dbReference>
<dbReference type="GO" id="GO:0005840">
    <property type="term" value="C:ribosome"/>
    <property type="evidence" value="ECO:0007669"/>
    <property type="project" value="UniProtKB-KW"/>
</dbReference>
<dbReference type="GO" id="GO:0019843">
    <property type="term" value="F:rRNA binding"/>
    <property type="evidence" value="ECO:0007669"/>
    <property type="project" value="UniProtKB-UniRule"/>
</dbReference>
<dbReference type="GO" id="GO:0003735">
    <property type="term" value="F:structural constituent of ribosome"/>
    <property type="evidence" value="ECO:0007669"/>
    <property type="project" value="InterPro"/>
</dbReference>
<dbReference type="GO" id="GO:0006412">
    <property type="term" value="P:translation"/>
    <property type="evidence" value="ECO:0007669"/>
    <property type="project" value="UniProtKB-UniRule"/>
</dbReference>
<dbReference type="Gene3D" id="3.10.430.100">
    <property type="entry name" value="Ribosomal protein L9, C-terminal domain"/>
    <property type="match status" value="1"/>
</dbReference>
<dbReference type="Gene3D" id="3.40.5.10">
    <property type="entry name" value="Ribosomal protein L9, N-terminal domain"/>
    <property type="match status" value="1"/>
</dbReference>
<dbReference type="HAMAP" id="MF_00503">
    <property type="entry name" value="Ribosomal_bL9"/>
    <property type="match status" value="1"/>
</dbReference>
<dbReference type="InterPro" id="IPR000244">
    <property type="entry name" value="Ribosomal_bL9"/>
</dbReference>
<dbReference type="InterPro" id="IPR009027">
    <property type="entry name" value="Ribosomal_bL9/RNase_H1_N"/>
</dbReference>
<dbReference type="InterPro" id="IPR020594">
    <property type="entry name" value="Ribosomal_bL9_bac/chp"/>
</dbReference>
<dbReference type="InterPro" id="IPR020069">
    <property type="entry name" value="Ribosomal_bL9_C"/>
</dbReference>
<dbReference type="InterPro" id="IPR036791">
    <property type="entry name" value="Ribosomal_bL9_C_sf"/>
</dbReference>
<dbReference type="InterPro" id="IPR020070">
    <property type="entry name" value="Ribosomal_bL9_N"/>
</dbReference>
<dbReference type="InterPro" id="IPR036935">
    <property type="entry name" value="Ribosomal_bL9_N_sf"/>
</dbReference>
<dbReference type="NCBIfam" id="TIGR00158">
    <property type="entry name" value="L9"/>
    <property type="match status" value="1"/>
</dbReference>
<dbReference type="PANTHER" id="PTHR21368">
    <property type="entry name" value="50S RIBOSOMAL PROTEIN L9"/>
    <property type="match status" value="1"/>
</dbReference>
<dbReference type="Pfam" id="PF03948">
    <property type="entry name" value="Ribosomal_L9_C"/>
    <property type="match status" value="1"/>
</dbReference>
<dbReference type="Pfam" id="PF01281">
    <property type="entry name" value="Ribosomal_L9_N"/>
    <property type="match status" value="1"/>
</dbReference>
<dbReference type="SUPFAM" id="SSF55658">
    <property type="entry name" value="L9 N-domain-like"/>
    <property type="match status" value="1"/>
</dbReference>
<dbReference type="SUPFAM" id="SSF55653">
    <property type="entry name" value="Ribosomal protein L9 C-domain"/>
    <property type="match status" value="1"/>
</dbReference>
<dbReference type="PROSITE" id="PS00651">
    <property type="entry name" value="RIBOSOMAL_L9"/>
    <property type="match status" value="1"/>
</dbReference>
<accession>C5CUP3</accession>
<feature type="chain" id="PRO_1000206565" description="Large ribosomal subunit protein bL9">
    <location>
        <begin position="1"/>
        <end position="150"/>
    </location>
</feature>
<reference key="1">
    <citation type="journal article" date="2011" name="J. Bacteriol.">
        <title>Complete genome sequence of the metabolically versatile plant growth-promoting endophyte, Variovorax paradoxus S110.</title>
        <authorList>
            <person name="Han J.I."/>
            <person name="Choi H.K."/>
            <person name="Lee S.W."/>
            <person name="Orwin P.M."/>
            <person name="Kim J."/>
            <person name="Laroe S.L."/>
            <person name="Kim T.G."/>
            <person name="O'Neil J."/>
            <person name="Leadbetter J.R."/>
            <person name="Lee S.Y."/>
            <person name="Hur C.G."/>
            <person name="Spain J.C."/>
            <person name="Ovchinnikova G."/>
            <person name="Goodwin L."/>
            <person name="Han C."/>
        </authorList>
    </citation>
    <scope>NUCLEOTIDE SEQUENCE [LARGE SCALE GENOMIC DNA]</scope>
    <source>
        <strain>S110</strain>
    </source>
</reference>
<keyword id="KW-0687">Ribonucleoprotein</keyword>
<keyword id="KW-0689">Ribosomal protein</keyword>
<keyword id="KW-0694">RNA-binding</keyword>
<keyword id="KW-0699">rRNA-binding</keyword>
<comment type="function">
    <text evidence="1">Binds to the 23S rRNA.</text>
</comment>
<comment type="similarity">
    <text evidence="1">Belongs to the bacterial ribosomal protein bL9 family.</text>
</comment>
<sequence length="150" mass="15762">MQIILLDKVLNVGGLGDIVKVKDGYARNFLIPTGRARRATAANKAEFEAKRVELEKAAAAKLAESQAQGEKLGGTTVKLTQKAGVDGRLFGSVTNGDIAEELGKQGYKVAKSQVRLPNGPIKVVGDSTVSVALHTDVVVDITVTVYGETA</sequence>